<name>SSRP_BRUMB</name>
<proteinExistence type="inferred from homology"/>
<gene>
    <name evidence="1" type="primary">smpB</name>
    <name type="ordered locus">BMEA_A0684</name>
</gene>
<evidence type="ECO:0000255" key="1">
    <source>
        <dbReference type="HAMAP-Rule" id="MF_00023"/>
    </source>
</evidence>
<evidence type="ECO:0000256" key="2">
    <source>
        <dbReference type="SAM" id="MobiDB-lite"/>
    </source>
</evidence>
<protein>
    <recommendedName>
        <fullName evidence="1">SsrA-binding protein</fullName>
    </recommendedName>
    <alternativeName>
        <fullName evidence="1">Small protein B</fullName>
    </alternativeName>
</protein>
<organism>
    <name type="scientific">Brucella melitensis biotype 2 (strain ATCC 23457)</name>
    <dbReference type="NCBI Taxonomy" id="546272"/>
    <lineage>
        <taxon>Bacteria</taxon>
        <taxon>Pseudomonadati</taxon>
        <taxon>Pseudomonadota</taxon>
        <taxon>Alphaproteobacteria</taxon>
        <taxon>Hyphomicrobiales</taxon>
        <taxon>Brucellaceae</taxon>
        <taxon>Brucella/Ochrobactrum group</taxon>
        <taxon>Brucella</taxon>
    </lineage>
</organism>
<feature type="chain" id="PRO_1000197609" description="SsrA-binding protein">
    <location>
        <begin position="1"/>
        <end position="158"/>
    </location>
</feature>
<feature type="region of interest" description="Disordered" evidence="2">
    <location>
        <begin position="131"/>
        <end position="158"/>
    </location>
</feature>
<feature type="compositionally biased region" description="Basic and acidic residues" evidence="2">
    <location>
        <begin position="136"/>
        <end position="158"/>
    </location>
</feature>
<keyword id="KW-0963">Cytoplasm</keyword>
<keyword id="KW-0694">RNA-binding</keyword>
<comment type="function">
    <text evidence="1">Required for rescue of stalled ribosomes mediated by trans-translation. Binds to transfer-messenger RNA (tmRNA), required for stable association of tmRNA with ribosomes. tmRNA and SmpB together mimic tRNA shape, replacing the anticodon stem-loop with SmpB. tmRNA is encoded by the ssrA gene; the 2 termini fold to resemble tRNA(Ala) and it encodes a 'tag peptide', a short internal open reading frame. During trans-translation Ala-aminoacylated tmRNA acts like a tRNA, entering the A-site of stalled ribosomes, displacing the stalled mRNA. The ribosome then switches to translate the ORF on the tmRNA; the nascent peptide is terminated with the 'tag peptide' encoded by the tmRNA and targeted for degradation. The ribosome is freed to recommence translation, which seems to be the essential function of trans-translation.</text>
</comment>
<comment type="subcellular location">
    <subcellularLocation>
        <location evidence="1">Cytoplasm</location>
    </subcellularLocation>
    <text evidence="1">The tmRNA-SmpB complex associates with stalled 70S ribosomes.</text>
</comment>
<comment type="similarity">
    <text evidence="1">Belongs to the SmpB family.</text>
</comment>
<reference key="1">
    <citation type="submission" date="2009-03" db="EMBL/GenBank/DDBJ databases">
        <title>Brucella melitensis ATCC 23457 whole genome shotgun sequencing project.</title>
        <authorList>
            <person name="Setubal J.C."/>
            <person name="Boyle S."/>
            <person name="Crasta O.R."/>
            <person name="Gillespie J.J."/>
            <person name="Kenyon R.W."/>
            <person name="Lu J."/>
            <person name="Mane S."/>
            <person name="Nagrani S."/>
            <person name="Shallom J.M."/>
            <person name="Shallom S."/>
            <person name="Shukla M."/>
            <person name="Snyder E.E."/>
            <person name="Sobral B.W."/>
            <person name="Wattam A.R."/>
            <person name="Will R."/>
            <person name="Williams K."/>
            <person name="Yoo H."/>
            <person name="Munk C."/>
            <person name="Tapia R."/>
            <person name="Han C."/>
            <person name="Detter J.C."/>
            <person name="Bruce D."/>
            <person name="Brettin T.S."/>
        </authorList>
    </citation>
    <scope>NUCLEOTIDE SEQUENCE [LARGE SCALE GENOMIC DNA]</scope>
    <source>
        <strain>ATCC 23457</strain>
    </source>
</reference>
<dbReference type="EMBL" id="CP001488">
    <property type="protein sequence ID" value="ACO00447.1"/>
    <property type="molecule type" value="Genomic_DNA"/>
</dbReference>
<dbReference type="RefSeq" id="WP_002963791.1">
    <property type="nucleotide sequence ID" value="NC_012441.1"/>
</dbReference>
<dbReference type="SMR" id="C0RHY9"/>
<dbReference type="GeneID" id="97534023"/>
<dbReference type="KEGG" id="bmi:BMEA_A0684"/>
<dbReference type="HOGENOM" id="CLU_108953_0_1_5"/>
<dbReference type="Proteomes" id="UP000001748">
    <property type="component" value="Chromosome I"/>
</dbReference>
<dbReference type="GO" id="GO:0005829">
    <property type="term" value="C:cytosol"/>
    <property type="evidence" value="ECO:0007669"/>
    <property type="project" value="TreeGrafter"/>
</dbReference>
<dbReference type="GO" id="GO:0003723">
    <property type="term" value="F:RNA binding"/>
    <property type="evidence" value="ECO:0007669"/>
    <property type="project" value="UniProtKB-UniRule"/>
</dbReference>
<dbReference type="GO" id="GO:0070929">
    <property type="term" value="P:trans-translation"/>
    <property type="evidence" value="ECO:0007669"/>
    <property type="project" value="UniProtKB-UniRule"/>
</dbReference>
<dbReference type="CDD" id="cd09294">
    <property type="entry name" value="SmpB"/>
    <property type="match status" value="1"/>
</dbReference>
<dbReference type="Gene3D" id="2.40.280.10">
    <property type="match status" value="1"/>
</dbReference>
<dbReference type="HAMAP" id="MF_00023">
    <property type="entry name" value="SmpB"/>
    <property type="match status" value="1"/>
</dbReference>
<dbReference type="InterPro" id="IPR023620">
    <property type="entry name" value="SmpB"/>
</dbReference>
<dbReference type="InterPro" id="IPR000037">
    <property type="entry name" value="SsrA-bd_prot"/>
</dbReference>
<dbReference type="InterPro" id="IPR020081">
    <property type="entry name" value="SsrA-bd_prot_CS"/>
</dbReference>
<dbReference type="NCBIfam" id="NF003843">
    <property type="entry name" value="PRK05422.1"/>
    <property type="match status" value="1"/>
</dbReference>
<dbReference type="NCBIfam" id="TIGR00086">
    <property type="entry name" value="smpB"/>
    <property type="match status" value="1"/>
</dbReference>
<dbReference type="PANTHER" id="PTHR30308:SF2">
    <property type="entry name" value="SSRA-BINDING PROTEIN"/>
    <property type="match status" value="1"/>
</dbReference>
<dbReference type="PANTHER" id="PTHR30308">
    <property type="entry name" value="TMRNA-BINDING COMPONENT OF TRANS-TRANSLATION TAGGING COMPLEX"/>
    <property type="match status" value="1"/>
</dbReference>
<dbReference type="Pfam" id="PF01668">
    <property type="entry name" value="SmpB"/>
    <property type="match status" value="1"/>
</dbReference>
<dbReference type="SUPFAM" id="SSF74982">
    <property type="entry name" value="Small protein B (SmpB)"/>
    <property type="match status" value="1"/>
</dbReference>
<dbReference type="PROSITE" id="PS01317">
    <property type="entry name" value="SSRP"/>
    <property type="match status" value="1"/>
</dbReference>
<sequence>MNKPKNSPARKMIAENRKARFNFEILDTLEAGLVLTGTEVKSLRANQANIAESYASFEDGEFWLINSYIPEYTQGNRFNHEPRRLRKLLVSRREMSRLFNSVSREGMTVVPLKLYFNDRGRAKLELALARGKKTHDKRETEKKRDWNREKARLLRDRG</sequence>
<accession>C0RHY9</accession>